<keyword id="KW-0227">DNA damage</keyword>
<keyword id="KW-0234">DNA repair</keyword>
<keyword id="KW-0647">Proteasome</keyword>
<keyword id="KW-1185">Reference proteome</keyword>
<keyword id="KW-0677">Repeat</keyword>
<organism>
    <name type="scientific">Arabidopsis thaliana</name>
    <name type="common">Mouse-ear cress</name>
    <dbReference type="NCBI Taxonomy" id="3702"/>
    <lineage>
        <taxon>Eukaryota</taxon>
        <taxon>Viridiplantae</taxon>
        <taxon>Streptophyta</taxon>
        <taxon>Embryophyta</taxon>
        <taxon>Tracheophyta</taxon>
        <taxon>Spermatophyta</taxon>
        <taxon>Magnoliopsida</taxon>
        <taxon>eudicotyledons</taxon>
        <taxon>Gunneridae</taxon>
        <taxon>Pentapetalae</taxon>
        <taxon>rosids</taxon>
        <taxon>malvids</taxon>
        <taxon>Brassicales</taxon>
        <taxon>Brassicaceae</taxon>
        <taxon>Camelineae</taxon>
        <taxon>Arabidopsis</taxon>
    </lineage>
</organism>
<reference key="1">
    <citation type="journal article" date="2000" name="DNA Res.">
        <title>Structural analysis of Arabidopsis thaliana chromosome 3. I. Sequence features of the regions of 4,504,864 bp covered by sixty P1 and TAC clones.</title>
        <authorList>
            <person name="Sato S."/>
            <person name="Nakamura Y."/>
            <person name="Kaneko T."/>
            <person name="Katoh T."/>
            <person name="Asamizu E."/>
            <person name="Tabata S."/>
        </authorList>
    </citation>
    <scope>NUCLEOTIDE SEQUENCE [LARGE SCALE GENOMIC DNA]</scope>
    <source>
        <strain>cv. Columbia</strain>
    </source>
</reference>
<reference key="2">
    <citation type="journal article" date="2017" name="Plant J.">
        <title>Araport11: a complete reannotation of the Arabidopsis thaliana reference genome.</title>
        <authorList>
            <person name="Cheng C.Y."/>
            <person name="Krishnakumar V."/>
            <person name="Chan A.P."/>
            <person name="Thibaud-Nissen F."/>
            <person name="Schobel S."/>
            <person name="Town C.D."/>
        </authorList>
    </citation>
    <scope>GENOME REANNOTATION</scope>
    <source>
        <strain>cv. Columbia</strain>
    </source>
</reference>
<reference key="3">
    <citation type="journal article" date="2003" name="Science">
        <title>Empirical analysis of transcriptional activity in the Arabidopsis genome.</title>
        <authorList>
            <person name="Yamada K."/>
            <person name="Lim J."/>
            <person name="Dale J.M."/>
            <person name="Chen H."/>
            <person name="Shinn P."/>
            <person name="Palm C.J."/>
            <person name="Southwick A.M."/>
            <person name="Wu H.C."/>
            <person name="Kim C.J."/>
            <person name="Nguyen M."/>
            <person name="Pham P.K."/>
            <person name="Cheuk R.F."/>
            <person name="Karlin-Newmann G."/>
            <person name="Liu S.X."/>
            <person name="Lam B."/>
            <person name="Sakano H."/>
            <person name="Wu T."/>
            <person name="Yu G."/>
            <person name="Miranda M."/>
            <person name="Quach H.L."/>
            <person name="Tripp M."/>
            <person name="Chang C.H."/>
            <person name="Lee J.M."/>
            <person name="Toriumi M.J."/>
            <person name="Chan M.M."/>
            <person name="Tang C.C."/>
            <person name="Onodera C.S."/>
            <person name="Deng J.M."/>
            <person name="Akiyama K."/>
            <person name="Ansari Y."/>
            <person name="Arakawa T."/>
            <person name="Banh J."/>
            <person name="Banno F."/>
            <person name="Bowser L."/>
            <person name="Brooks S.Y."/>
            <person name="Carninci P."/>
            <person name="Chao Q."/>
            <person name="Choy N."/>
            <person name="Enju A."/>
            <person name="Goldsmith A.D."/>
            <person name="Gurjal M."/>
            <person name="Hansen N.F."/>
            <person name="Hayashizaki Y."/>
            <person name="Johnson-Hopson C."/>
            <person name="Hsuan V.W."/>
            <person name="Iida K."/>
            <person name="Karnes M."/>
            <person name="Khan S."/>
            <person name="Koesema E."/>
            <person name="Ishida J."/>
            <person name="Jiang P.X."/>
            <person name="Jones T."/>
            <person name="Kawai J."/>
            <person name="Kamiya A."/>
            <person name="Meyers C."/>
            <person name="Nakajima M."/>
            <person name="Narusaka M."/>
            <person name="Seki M."/>
            <person name="Sakurai T."/>
            <person name="Satou M."/>
            <person name="Tamse R."/>
            <person name="Vaysberg M."/>
            <person name="Wallender E.K."/>
            <person name="Wong C."/>
            <person name="Yamamura Y."/>
            <person name="Yuan S."/>
            <person name="Shinozaki K."/>
            <person name="Davis R.W."/>
            <person name="Theologis A."/>
            <person name="Ecker J.R."/>
        </authorList>
    </citation>
    <scope>NUCLEOTIDE SEQUENCE [LARGE SCALE MRNA] OF 1632-1811</scope>
    <source>
        <strain>cv. Columbia</strain>
    </source>
</reference>
<reference key="4">
    <citation type="journal article" date="2010" name="J. Biol. Chem.">
        <title>Affinity purification of the Arabidopsis 26 S proteasome reveals a diverse array of plant proteolytic complexes.</title>
        <authorList>
            <person name="Book A.J."/>
            <person name="Gladman N.P."/>
            <person name="Lee S.S."/>
            <person name="Scalf M."/>
            <person name="Smith L.M."/>
            <person name="Vierstra R.D."/>
        </authorList>
    </citation>
    <scope>IDENTIFICATION IN THE PROTEASOME</scope>
    <scope>DISRUPTION PHENOTYPE</scope>
    <scope>INDUCTION</scope>
</reference>
<feature type="chain" id="PRO_0000423302" description="Proteasome activator subunit 4">
    <location>
        <begin position="1"/>
        <end position="1811"/>
    </location>
</feature>
<feature type="repeat" description="HEAT 1">
    <location>
        <begin position="563"/>
        <end position="599"/>
    </location>
</feature>
<feature type="repeat" description="HEAT 2">
    <location>
        <begin position="1156"/>
        <end position="1193"/>
    </location>
</feature>
<feature type="repeat" description="HEAT 3">
    <location>
        <begin position="1442"/>
        <end position="1479"/>
    </location>
</feature>
<feature type="repeat" description="HEAT 4">
    <location>
        <begin position="1613"/>
        <end position="1650"/>
    </location>
</feature>
<feature type="repeat" description="HEAT 5">
    <location>
        <begin position="1655"/>
        <end position="1692"/>
    </location>
</feature>
<feature type="repeat" description="HEAT 6">
    <location>
        <begin position="1746"/>
        <end position="1783"/>
    </location>
</feature>
<feature type="region of interest" description="Bromodomain-like (BRDL)" evidence="1">
    <location>
        <begin position="1626"/>
        <end position="1711"/>
    </location>
</feature>
<name>PSME4_ARATH</name>
<protein>
    <recommendedName>
        <fullName>Proteasome activator subunit 4</fullName>
    </recommendedName>
    <alternativeName>
        <fullName>Proteasome activator PA200</fullName>
    </alternativeName>
</protein>
<comment type="function">
    <text evidence="1">Associated component of the proteasome that specifically recognizes acetylated histones and promotes ATP- and ubiquitin-independent degradation of core histones during DNA damage response. Recognizes and binds acetylated histones via its bromodomain-like (BRDL) region and activates the proteasome by opening the gated channel for substrate entry. Binds to the core proteasome via its C-terminus, which occupies the same binding sites as the proteasomal ATPases, opening the closed structure of the proteasome via an active gating mechanism. involved in DNA damage response: binds to acetylated histones and promotes degradation of histones (By similarity).</text>
</comment>
<comment type="subunit">
    <text evidence="2">Interacts with the 26S proteasomes.</text>
</comment>
<comment type="induction">
    <text evidence="2">Upon MG132 treatment.</text>
</comment>
<comment type="domain">
    <text evidence="1">The bromodomain-like (BRDL) region specifically recognizes and binds acetylated histones.</text>
</comment>
<comment type="disruption phenotype">
    <text evidence="2">No visible phenotype.</text>
</comment>
<comment type="similarity">
    <text evidence="3">Belongs to the BLM10 family.</text>
</comment>
<comment type="sequence caution" evidence="3">
    <conflict type="erroneous gene model prediction">
        <sequence resource="EMBL-CDS" id="BAB02802"/>
    </conflict>
</comment>
<proteinExistence type="evidence at transcript level"/>
<dbReference type="EMBL" id="AB024034">
    <property type="protein sequence ID" value="BAB02802.1"/>
    <property type="status" value="ALT_SEQ"/>
    <property type="molecule type" value="Genomic_DNA"/>
</dbReference>
<dbReference type="EMBL" id="CP002686">
    <property type="protein sequence ID" value="AEE75334.2"/>
    <property type="molecule type" value="Genomic_DNA"/>
</dbReference>
<dbReference type="EMBL" id="AY080673">
    <property type="protein sequence ID" value="AAL86349.1"/>
    <property type="molecule type" value="mRNA"/>
</dbReference>
<dbReference type="RefSeq" id="NP_001319538.1">
    <property type="nucleotide sequence ID" value="NM_001338043.1"/>
</dbReference>
<dbReference type="SMR" id="F4JC97"/>
<dbReference type="BioGRID" id="5867">
    <property type="interactions" value="1"/>
</dbReference>
<dbReference type="FunCoup" id="F4JC97">
    <property type="interactions" value="3343"/>
</dbReference>
<dbReference type="STRING" id="3702.F4JC97"/>
<dbReference type="iPTMnet" id="F4JC97"/>
<dbReference type="PaxDb" id="3702-AT3G13330.1"/>
<dbReference type="ProteomicsDB" id="248902"/>
<dbReference type="EnsemblPlants" id="AT3G13330.1">
    <property type="protein sequence ID" value="AT3G13330.1"/>
    <property type="gene ID" value="AT3G13330"/>
</dbReference>
<dbReference type="GeneID" id="820533"/>
<dbReference type="Gramene" id="AT3G13330.1">
    <property type="protein sequence ID" value="AT3G13330.1"/>
    <property type="gene ID" value="AT3G13330"/>
</dbReference>
<dbReference type="KEGG" id="ath:AT3G13330"/>
<dbReference type="Araport" id="AT3G13330"/>
<dbReference type="TAIR" id="AT3G13330">
    <property type="gene designation" value="PA200"/>
</dbReference>
<dbReference type="eggNOG" id="KOG1851">
    <property type="taxonomic scope" value="Eukaryota"/>
</dbReference>
<dbReference type="HOGENOM" id="CLU_000772_3_0_1"/>
<dbReference type="InParanoid" id="F4JC97"/>
<dbReference type="OMA" id="ECTQLVP"/>
<dbReference type="OrthoDB" id="17907at2759"/>
<dbReference type="PRO" id="PR:F4JC97"/>
<dbReference type="Proteomes" id="UP000006548">
    <property type="component" value="Chromosome 3"/>
</dbReference>
<dbReference type="ExpressionAtlas" id="F4JC97">
    <property type="expression patterns" value="baseline and differential"/>
</dbReference>
<dbReference type="GO" id="GO:0000502">
    <property type="term" value="C:proteasome complex"/>
    <property type="evidence" value="ECO:0007669"/>
    <property type="project" value="UniProtKB-KW"/>
</dbReference>
<dbReference type="GO" id="GO:0070577">
    <property type="term" value="F:lysine-acetylated histone binding"/>
    <property type="evidence" value="ECO:0007669"/>
    <property type="project" value="InterPro"/>
</dbReference>
<dbReference type="GO" id="GO:0016504">
    <property type="term" value="F:peptidase activator activity"/>
    <property type="evidence" value="ECO:0007669"/>
    <property type="project" value="InterPro"/>
</dbReference>
<dbReference type="GO" id="GO:0070628">
    <property type="term" value="F:proteasome binding"/>
    <property type="evidence" value="ECO:0007669"/>
    <property type="project" value="InterPro"/>
</dbReference>
<dbReference type="GO" id="GO:0006281">
    <property type="term" value="P:DNA repair"/>
    <property type="evidence" value="ECO:0007669"/>
    <property type="project" value="UniProtKB-KW"/>
</dbReference>
<dbReference type="Gene3D" id="1.25.10.10">
    <property type="entry name" value="Leucine-rich Repeat Variant"/>
    <property type="match status" value="1"/>
</dbReference>
<dbReference type="InterPro" id="IPR011989">
    <property type="entry name" value="ARM-like"/>
</dbReference>
<dbReference type="InterPro" id="IPR016024">
    <property type="entry name" value="ARM-type_fold"/>
</dbReference>
<dbReference type="InterPro" id="IPR032430">
    <property type="entry name" value="Blm10_mid"/>
</dbReference>
<dbReference type="InterPro" id="IPR035309">
    <property type="entry name" value="PSME4"/>
</dbReference>
<dbReference type="InterPro" id="IPR021843">
    <property type="entry name" value="PSME4_C"/>
</dbReference>
<dbReference type="PANTHER" id="PTHR32170">
    <property type="entry name" value="PROTEASOME ACTIVATOR COMPLEX SUBUNIT 4"/>
    <property type="match status" value="1"/>
</dbReference>
<dbReference type="PANTHER" id="PTHR32170:SF3">
    <property type="entry name" value="PROTEASOME ACTIVATOR COMPLEX SUBUNIT 4"/>
    <property type="match status" value="1"/>
</dbReference>
<dbReference type="Pfam" id="PF16507">
    <property type="entry name" value="HEAT_PSME4_mid"/>
    <property type="match status" value="1"/>
</dbReference>
<dbReference type="Pfam" id="PF11919">
    <property type="entry name" value="PSME4_C"/>
    <property type="match status" value="1"/>
</dbReference>
<dbReference type="SUPFAM" id="SSF48371">
    <property type="entry name" value="ARM repeat"/>
    <property type="match status" value="2"/>
</dbReference>
<accession>F4JC97</accession>
<accession>Q8RXU1</accession>
<accession>Q9LTT5</accession>
<sequence>MHLYNEWLPPPVAEETKKEKESFARVVRCVKELHRPDDPESVYATLKWISVIELFVRAKSELSVEDVSELVEIGLQIFHSSENKLYAQVRWGNVLVRLINKFRKKLSLKVQWRPLYDTLIHAHFSRSPGPEGWRLRQRHFMAVTSLIRSCRRFFPQGAASEIWSEFMSLLENPWHNSSFEGSGFVRLFLPTNPENQDFFSEKWIKNVLELWDSIPNCQFWNSQWTSVLARVIKNCSFIDWESYLPMLFSRFLNMFEVPVANGSGSYPFSVDVPRNTRFLFSNRTTTPSKSIAQSIVYFLKPGSSAHEQLEKLVNLLEQYYHPSNGGRWTYSLERFLLHLVIAFQKRLQREQQDPDSLPATCLGKPERVAFVGVVLKLIDRGQYSKNEHLSETVAAATSMLSYVEPSLVLPFVASRFHLALETTTATHQLKTAMMSVAFAGRSILQSSMSTAKSQDLGGDVDDRMFLDLIGISLSNALLGMDANDPPKTLATMQLIGSIFSNMAVLDDSSDDLSFMTMASFSEWLDEFLCRLIALLQHLEPNSVINEGLSSSATSGTFLVEDGPYYYCMLEILLGRLSGSLYNQALKKISKFVQTNILPGAIAEVGLLCCACVHSTPEEAVAQIVEPMLLAVISSLKEIPVNGYGGKGSAETLVSNKQDKQTLSPALEAAIDYQLKVLSVAITYGGSSLLPYKGLLIEAISSAFNSSSWKVNGAGDHLLRSLLGSLILYYPIDQYKCLSRHPAAPALEEWISTKASSKDEQVAHSRWHVPTQEETQFANELLDLHLQSALDDLLSICQSNIHSDAGDEKTHLKVTLLRIDSTLQGVLSCLPDFRPSPRHDMVEDLQFFIAGASGSCVGSAEIREKTAITIHAACKYLLEKKSDDSILLILIIRIMDALGNYGSLEYDEWSNHRQAWKLESAAIVEPPANFITEFNSKGKRRPRWALIDKAYMHNTWRSSQSSYHLFRTDGNFSPPEPLTFLVDDLLTLCLHNYETVRVLAGKSLIKLLKRWPQLLSKCVLSLTENLRKPDVQEYVVLGSCAILSSHSVLKHLTTDPKSFSSFLLGILSSSHHESMKSQKAIIELFVKYNIHFAGLSRNILRSLESHVEGSTSGDLVSQIGSMSFDSSSLHWRYNLMANRVLLLLVMSSRIDPSFSLKILDETAGHFLKNLKSQLPQTRILAISALNILLKESPHKMQGKDQPSVSSQETENANSSLDLALSQIFREEGFFKETFESLSHIHITDTDSSSRGNHGSSSFQSMADKSITRFYFEFSASWPRTPSWISLLGSDIFYPSFARIFKRLAQECGVPVLLALKSPLEEFCNAKERPKQCVAAEALAGVLHSDVNGLFNEWDSWIMVQLQNVILGQSVESIPEWAACIRYAVTGKGKQGTKIPVMRQQILDCIVAPLPPTATTTVVAKRYAFLSAALIELSPPKMPVTEVKLHIVLLDELICNMSHSSAQIREAIGVILSVLCSNIRLRMSYQQEYPTEEGKTDVDSQLKEENWFKLISAKASEAVKNIQQASISDSLDTSTDVDMGNAQSNGDSLDDVKWMETLFHFIISSFKSGRASYLLDVIAGFLYPVMSLQETSHKDLSILAKAAFELLKWRVFPESHLQKVIGVILSSADDSNWRIRSSTLTYLRTFMYRHTFILTHEDKQKIWKTVEKLLVDSQVEVREHAAAVLAGLMKGGDEDFAADFRDRSYAEANSIQKRRNRRKSSSTQSIAGVHGAVLGLVASVLSVPYDMPSWLPEHVTLLARFAGEPTPIKSTVTKAVAEFRRTHADTWNIQKDSFTEDQLEILADTSSSSSYFA</sequence>
<evidence type="ECO:0000250" key="1"/>
<evidence type="ECO:0000269" key="2">
    <source>
    </source>
</evidence>
<evidence type="ECO:0000305" key="3"/>
<gene>
    <name type="primary">PA200</name>
    <name type="ordered locus">At3g13330</name>
    <name type="ORF">MDC11.16</name>
</gene>